<protein>
    <recommendedName>
        <fullName>Genome polyprotein</fullName>
    </recommendedName>
    <alternativeName>
        <fullName>p254</fullName>
    </alternativeName>
    <component>
        <recommendedName>
            <fullName>NS1</fullName>
        </recommendedName>
        <alternativeName>
            <fullName>Protein p16</fullName>
        </alternativeName>
    </component>
    <component>
        <recommendedName>
            <fullName>NS2</fullName>
        </recommendedName>
        <alternativeName>
            <fullName>Protein p23</fullName>
        </alternativeName>
    </component>
    <component>
        <recommendedName>
            <fullName>NTPase</fullName>
            <ecNumber evidence="6">3.6.1.15</ecNumber>
        </recommendedName>
        <alternativeName>
            <fullName>2C-like protein</fullName>
        </alternativeName>
        <alternativeName>
            <fullName>NS3</fullName>
        </alternativeName>
        <alternativeName>
            <fullName>P2C</fullName>
        </alternativeName>
        <alternativeName>
            <fullName>p37</fullName>
        </alternativeName>
    </component>
    <component>
        <recommendedName>
            <fullName>Precursor p41</fullName>
        </recommendedName>
    </component>
    <component>
        <recommendedName>
            <fullName>NS4</fullName>
        </recommendedName>
        <alternativeName>
            <fullName>Protein p29</fullName>
        </alternativeName>
    </component>
    <component>
        <recommendedName>
            <fullName>Protein p23/2</fullName>
        </recommendedName>
    </component>
    <component>
        <recommendedName>
            <fullName>Protein p18</fullName>
        </recommendedName>
    </component>
    <component>
        <recommendedName>
            <fullName>Viral genome-linked protein</fullName>
        </recommendedName>
        <alternativeName>
            <fullName>NS5</fullName>
        </alternativeName>
        <alternativeName>
            <fullName>VPg</fullName>
        </alternativeName>
        <alternativeName>
            <fullName>p13</fullName>
        </alternativeName>
    </component>
    <component>
        <recommendedName>
            <fullName>3C-like protease</fullName>
            <shortName>3CLpro</shortName>
            <ecNumber>3.4.22.66</ecNumber>
        </recommendedName>
        <alternativeName>
            <fullName>Calicivirin</fullName>
        </alternativeName>
        <alternativeName>
            <fullName>NS6</fullName>
        </alternativeName>
        <alternativeName>
            <fullName>Thiol protease P3C</fullName>
        </alternativeName>
        <alternativeName>
            <fullName>p15</fullName>
        </alternativeName>
    </component>
    <component>
        <recommendedName>
            <fullName>RNA-directed RNA polymerase</fullName>
            <ecNumber>2.7.7.48</ecNumber>
        </recommendedName>
        <alternativeName>
            <fullName>3Dpol</fullName>
        </alternativeName>
        <alternativeName>
            <fullName>NS7</fullName>
        </alternativeName>
        <alternativeName>
            <fullName>p58</fullName>
        </alternativeName>
    </component>
    <component>
        <recommendedName>
            <fullName>Capsid protein VP60</fullName>
        </recommendedName>
    </component>
</protein>
<dbReference type="EC" id="3.6.1.15" evidence="6"/>
<dbReference type="EC" id="3.4.22.66"/>
<dbReference type="EC" id="2.7.7.48"/>
<dbReference type="EMBL" id="X87607">
    <property type="protein sequence ID" value="CAA60910.1"/>
    <property type="molecule type" value="Genomic_RNA"/>
</dbReference>
<dbReference type="PIR" id="S55399">
    <property type="entry name" value="S55399"/>
</dbReference>
<dbReference type="SMR" id="Q89273"/>
<dbReference type="MEROPS" id="C24.001"/>
<dbReference type="Proteomes" id="UP000140996">
    <property type="component" value="Genome"/>
</dbReference>
<dbReference type="GO" id="GO:0044165">
    <property type="term" value="C:host cell endoplasmic reticulum"/>
    <property type="evidence" value="ECO:0007669"/>
    <property type="project" value="UniProtKB-SubCell"/>
</dbReference>
<dbReference type="GO" id="GO:0019028">
    <property type="term" value="C:viral capsid"/>
    <property type="evidence" value="ECO:0007669"/>
    <property type="project" value="UniProtKB-KW"/>
</dbReference>
<dbReference type="GO" id="GO:0005524">
    <property type="term" value="F:ATP binding"/>
    <property type="evidence" value="ECO:0007669"/>
    <property type="project" value="UniProtKB-KW"/>
</dbReference>
<dbReference type="GO" id="GO:0004197">
    <property type="term" value="F:cysteine-type endopeptidase activity"/>
    <property type="evidence" value="ECO:0007669"/>
    <property type="project" value="InterPro"/>
</dbReference>
<dbReference type="GO" id="GO:0017111">
    <property type="term" value="F:ribonucleoside triphosphate phosphatase activity"/>
    <property type="evidence" value="ECO:0007669"/>
    <property type="project" value="UniProtKB-EC"/>
</dbReference>
<dbReference type="GO" id="GO:0003723">
    <property type="term" value="F:RNA binding"/>
    <property type="evidence" value="ECO:0007669"/>
    <property type="project" value="InterPro"/>
</dbReference>
<dbReference type="GO" id="GO:0003724">
    <property type="term" value="F:RNA helicase activity"/>
    <property type="evidence" value="ECO:0007669"/>
    <property type="project" value="InterPro"/>
</dbReference>
<dbReference type="GO" id="GO:0003968">
    <property type="term" value="F:RNA-directed RNA polymerase activity"/>
    <property type="evidence" value="ECO:0007669"/>
    <property type="project" value="UniProtKB-KW"/>
</dbReference>
<dbReference type="GO" id="GO:0006351">
    <property type="term" value="P:DNA-templated transcription"/>
    <property type="evidence" value="ECO:0007669"/>
    <property type="project" value="InterPro"/>
</dbReference>
<dbReference type="GO" id="GO:0006508">
    <property type="term" value="P:proteolysis"/>
    <property type="evidence" value="ECO:0007669"/>
    <property type="project" value="UniProtKB-KW"/>
</dbReference>
<dbReference type="GO" id="GO:0039694">
    <property type="term" value="P:viral RNA genome replication"/>
    <property type="evidence" value="ECO:0007669"/>
    <property type="project" value="InterPro"/>
</dbReference>
<dbReference type="CDD" id="cd00009">
    <property type="entry name" value="AAA"/>
    <property type="match status" value="1"/>
</dbReference>
<dbReference type="CDD" id="cd23192">
    <property type="entry name" value="Caliciviridae_RdRp"/>
    <property type="match status" value="1"/>
</dbReference>
<dbReference type="CDD" id="cd00205">
    <property type="entry name" value="rhv_like"/>
    <property type="match status" value="1"/>
</dbReference>
<dbReference type="Gene3D" id="1.10.260.110">
    <property type="match status" value="1"/>
</dbReference>
<dbReference type="Gene3D" id="1.20.960.20">
    <property type="match status" value="1"/>
</dbReference>
<dbReference type="Gene3D" id="2.60.120.20">
    <property type="match status" value="1"/>
</dbReference>
<dbReference type="Gene3D" id="3.30.70.270">
    <property type="match status" value="1"/>
</dbReference>
<dbReference type="Gene3D" id="4.10.8.20">
    <property type="entry name" value="DNA/RNA polymerases"/>
    <property type="match status" value="1"/>
</dbReference>
<dbReference type="Gene3D" id="3.40.50.300">
    <property type="entry name" value="P-loop containing nucleotide triphosphate hydrolases"/>
    <property type="match status" value="1"/>
</dbReference>
<dbReference type="InterPro" id="IPR004005">
    <property type="entry name" value="Calicivirus_coat"/>
</dbReference>
<dbReference type="InterPro" id="IPR043502">
    <property type="entry name" value="DNA/RNA_pol_sf"/>
</dbReference>
<dbReference type="InterPro" id="IPR004004">
    <property type="entry name" value="Helic/Pol/Pept_Calicivir-typ"/>
</dbReference>
<dbReference type="InterPro" id="IPR000605">
    <property type="entry name" value="Helicase_SF3_ssDNA/RNA_vir"/>
</dbReference>
<dbReference type="InterPro" id="IPR014759">
    <property type="entry name" value="Helicase_SF3_ssRNA_vir"/>
</dbReference>
<dbReference type="InterPro" id="IPR027417">
    <property type="entry name" value="P-loop_NTPase"/>
</dbReference>
<dbReference type="InterPro" id="IPR000317">
    <property type="entry name" value="Peptidase_C24"/>
</dbReference>
<dbReference type="InterPro" id="IPR009003">
    <property type="entry name" value="Peptidase_S1_PA"/>
</dbReference>
<dbReference type="InterPro" id="IPR043128">
    <property type="entry name" value="Rev_trsase/Diguanyl_cyclase"/>
</dbReference>
<dbReference type="InterPro" id="IPR033703">
    <property type="entry name" value="Rhv-like"/>
</dbReference>
<dbReference type="InterPro" id="IPR001205">
    <property type="entry name" value="RNA-dir_pol_C"/>
</dbReference>
<dbReference type="InterPro" id="IPR007094">
    <property type="entry name" value="RNA-dir_pol_PSvirus"/>
</dbReference>
<dbReference type="InterPro" id="IPR029053">
    <property type="entry name" value="Viral_coat"/>
</dbReference>
<dbReference type="InterPro" id="IPR049434">
    <property type="entry name" value="VPg"/>
</dbReference>
<dbReference type="Pfam" id="PF00915">
    <property type="entry name" value="Calici_coat"/>
    <property type="match status" value="1"/>
</dbReference>
<dbReference type="Pfam" id="PF03510">
    <property type="entry name" value="Peptidase_C24"/>
    <property type="match status" value="1"/>
</dbReference>
<dbReference type="Pfam" id="PF00680">
    <property type="entry name" value="RdRP_1"/>
    <property type="match status" value="1"/>
</dbReference>
<dbReference type="Pfam" id="PF00910">
    <property type="entry name" value="RNA_helicase"/>
    <property type="match status" value="1"/>
</dbReference>
<dbReference type="Pfam" id="PF20915">
    <property type="entry name" value="VPg"/>
    <property type="match status" value="1"/>
</dbReference>
<dbReference type="PRINTS" id="PR00916">
    <property type="entry name" value="2CENDOPTASE"/>
</dbReference>
<dbReference type="PRINTS" id="PR00918">
    <property type="entry name" value="CALICVIRUSNS"/>
</dbReference>
<dbReference type="SUPFAM" id="SSF56672">
    <property type="entry name" value="DNA/RNA polymerases"/>
    <property type="match status" value="1"/>
</dbReference>
<dbReference type="SUPFAM" id="SSF52540">
    <property type="entry name" value="P-loop containing nucleoside triphosphate hydrolases"/>
    <property type="match status" value="1"/>
</dbReference>
<dbReference type="SUPFAM" id="SSF88633">
    <property type="entry name" value="Positive stranded ssRNA viruses"/>
    <property type="match status" value="1"/>
</dbReference>
<dbReference type="SUPFAM" id="SSF50494">
    <property type="entry name" value="Trypsin-like serine proteases"/>
    <property type="match status" value="1"/>
</dbReference>
<dbReference type="PROSITE" id="PS51894">
    <property type="entry name" value="CV_3CL_PRO"/>
    <property type="match status" value="1"/>
</dbReference>
<dbReference type="PROSITE" id="PS50507">
    <property type="entry name" value="RDRP_SSRNA_POS"/>
    <property type="match status" value="1"/>
</dbReference>
<dbReference type="PROSITE" id="PS51218">
    <property type="entry name" value="SF3_HELICASE_2"/>
    <property type="match status" value="1"/>
</dbReference>
<comment type="function">
    <molecule>NS2</molecule>
    <text evidence="5 7">Together with NTPase and NS4, initiates the formation of the replication complex (By similarity). Induces the proliferation of the host smooth ER membranes forming long tubular structures (By similarity). These remodeled membranes probably form the viral factories that contain the replication complex (By similarity).</text>
</comment>
<comment type="function">
    <molecule>NTPase</molecule>
    <text evidence="5 6 7">Displays NTPase activity, but no helicase activity (By similarity). Induces the formation of convoluted membranes derived from the host ER (By similarity). These remodeled membranes probably form the viral factories that contain the replication complex (By similarity). Together with NS2 and NS4, initiates the formation of the replication complex (By similarity).</text>
</comment>
<comment type="function">
    <molecule>NS4</molecule>
    <text evidence="5 7">Probable key protein responsible for the formation of membrane alterations by the virus (By similarity). Induces the formation of convoluted membranes derived from the host ER (By similarity). These remodeled membranes probably form the viral factories that contain the replication complex (By similarity). Together with NS2 and NTPase, initiates the formation of the replication complex (By similarity).</text>
</comment>
<comment type="function">
    <molecule>Viral genome-linked protein</molecule>
    <text evidence="2">Viral genome-linked protein is covalently linked to the 5'-end of the positive-strand, negative-strand genomic RNAs and subgenomic RNA. Acts as a genome-linked replication primer. May recruit ribosome to viral RNA thereby promoting viral proteins translation. Interacts with host translation initiation complex to allow the translation of viral proteins.</text>
</comment>
<comment type="function">
    <molecule>3C-like protease</molecule>
    <text evidence="9">Processes the polyprotein. 3CLpro-RdRp is first released by autocleavage, then all other proteins are cleaved. May cleave polyadenylate-binding protein thereby inhibiting cellular translation.</text>
</comment>
<comment type="function">
    <molecule>RNA-directed RNA polymerase</molecule>
    <text evidence="8">Replicates genomic and antigenomic RNA by recognizing replications specific signals. Also transcribes a subgenomic mRNA by initiating RNA synthesis internally on antigenomic RNA. This sgRNA codes for structural proteins. Catalyzes the covalent attachment VPg with viral RNAs (By similarity).</text>
</comment>
<comment type="function">
    <molecule>Capsid protein VP60</molecule>
    <text evidence="1 8">Capsid protein VP60 self assembles to form an icosahedral capsid with a T=3 symmetry, about 35 nm in diameter, and consisting of 180 capsid proteins. A smaller form of capsid with a diameter of 23 nm might be capsid proteins assembled as icosahedron with T=1 symmetry. The capsid encapsulate VP2 proteins and genomic or subgenomic RNA. Attaches virion to target cells by binding histo-blood group antigens, inducing endocytosis of the viral particle (By similarity). Acidification of the endosome induces conformational change of capsid protein thereby injecting virus genomic RNA into host cytoplasm (By similarity).</text>
</comment>
<comment type="catalytic activity">
    <molecule>NTPase</molecule>
    <reaction evidence="6">
        <text>a ribonucleoside 5'-triphosphate + H2O = a ribonucleoside 5'-diphosphate + phosphate + H(+)</text>
        <dbReference type="Rhea" id="RHEA:23680"/>
        <dbReference type="ChEBI" id="CHEBI:15377"/>
        <dbReference type="ChEBI" id="CHEBI:15378"/>
        <dbReference type="ChEBI" id="CHEBI:43474"/>
        <dbReference type="ChEBI" id="CHEBI:57930"/>
        <dbReference type="ChEBI" id="CHEBI:61557"/>
        <dbReference type="EC" id="3.6.1.15"/>
    </reaction>
</comment>
<comment type="catalytic activity">
    <molecule>3C-like protease</molecule>
    <reaction evidence="11">
        <text>Endopeptidase with a preference for cleavage when the P1 position is occupied by Glu-|-Xaa and the P1' position is occupied by Gly-|-Yaa.</text>
        <dbReference type="EC" id="3.4.22.66"/>
    </reaction>
</comment>
<comment type="catalytic activity">
    <molecule>RNA-directed RNA polymerase</molecule>
    <reaction evidence="9">
        <text>RNA(n) + a ribonucleoside 5'-triphosphate = RNA(n+1) + diphosphate</text>
        <dbReference type="Rhea" id="RHEA:21248"/>
        <dbReference type="Rhea" id="RHEA-COMP:14527"/>
        <dbReference type="Rhea" id="RHEA-COMP:17342"/>
        <dbReference type="ChEBI" id="CHEBI:33019"/>
        <dbReference type="ChEBI" id="CHEBI:61557"/>
        <dbReference type="ChEBI" id="CHEBI:140395"/>
        <dbReference type="EC" id="2.7.7.48"/>
    </reaction>
</comment>
<comment type="cofactor">
    <molecule>RNA-directed RNA polymerase</molecule>
    <cofactor evidence="3">
        <name>Mn(2+)</name>
        <dbReference type="ChEBI" id="CHEBI:29035"/>
    </cofactor>
</comment>
<comment type="subunit">
    <molecule>NS2</molecule>
    <text evidence="4">Homodimer.</text>
</comment>
<comment type="subunit">
    <molecule>Capsid protein VP60</molecule>
    <text evidence="8">Homomultimer. Interacts with host type II histo-blood group structures antigens at the surface of target cells.</text>
</comment>
<comment type="subcellular location">
    <molecule>NS1</molecule>
    <subcellularLocation>
        <location evidence="4">Host cytoplasm</location>
    </subcellularLocation>
</comment>
<comment type="subcellular location">
    <molecule>NS2</molecule>
    <subcellularLocation>
        <location evidence="4">Host cytoplasm</location>
    </subcellularLocation>
    <subcellularLocation>
        <location>Host endoplasmic reticulum</location>
    </subcellularLocation>
</comment>
<comment type="subcellular location">
    <molecule>NS4</molecule>
    <subcellularLocation>
        <location evidence="4">Host cytoplasm</location>
    </subcellularLocation>
</comment>
<comment type="subcellular location">
    <molecule>Capsid protein VP60</molecule>
    <subcellularLocation>
        <location>Virion</location>
    </subcellularLocation>
    <subcellularLocation>
        <location evidence="13">Host cytoplasm</location>
    </subcellularLocation>
</comment>
<comment type="alternative products">
    <event type="alternative promoter"/>
    <isoform>
        <id>Q89273-1</id>
        <name>Genome polyprotein</name>
        <sequence type="displayed"/>
    </isoform>
    <isoform>
        <id>Q89273-2</id>
        <name>Subgenomic capsid protein VP60</name>
        <name>VP1</name>
        <sequence type="described" ref="VSP_034380"/>
    </isoform>
</comment>
<comment type="PTM">
    <molecule>Genome polyprotein</molecule>
    <text evidence="3">Specific enzymatic cleavages by its own cysteine protease yield mature proteins (By similarity). The protease cleaves itself from the nascent polyprotein autocatalytically. Precursor p41 can be cleaved by viral 3CLpro into protein p19 and VPg, or cleaved by host protease into protein p23/2 and protein p18 (By similarity).</text>
</comment>
<comment type="PTM">
    <molecule>Viral genome-linked protein</molecule>
    <text evidence="7">VPg is uridylylated by the polymerase and is covalently attached to the 5'-end of the polyadenylated genomic and subgenomic RNAs. This uridylylated form acts as a nucleotide-peptide primer for the polymerase.</text>
</comment>
<comment type="miscellaneous">
    <text evidence="1">Two different RNAs lead the expression of the capsid protein. One arises from the cleavage of the polyprotein translated from the genomic RNA and the other from the translation of a subgenomic RNA derived from the (-)RNA template. Capsid protein expressed from the subgenomic mRNA is produced in much larger amounts than the cleaved one (By similarity).</text>
</comment>
<comment type="miscellaneous">
    <molecule>Isoform Genome polyprotein</molecule>
    <text>Produced from the genomic RNA.</text>
</comment>
<comment type="miscellaneous">
    <molecule>Isoform Subgenomic capsid protein VP60</molecule>
    <text evidence="13">Produced from the subgenomic RNA.</text>
</comment>
<gene>
    <name type="ORF">ORF1</name>
</gene>
<organismHost>
    <name type="scientific">Oryctolagus cuniculus</name>
    <name type="common">Rabbit</name>
    <dbReference type="NCBI Taxonomy" id="9986"/>
</organismHost>
<name>POLG_RHDVB</name>
<reference key="1">
    <citation type="journal article" date="1994" name="J. Virol.">
        <title>Identification and characterization of a 3C-like protease from rabbit hemorrhagic disease virus, a calicivirus.</title>
        <authorList>
            <person name="Boniotti B."/>
            <person name="Wirblich C."/>
            <person name="Sibilia M."/>
            <person name="Meyers G."/>
            <person name="Thiel H.J."/>
            <person name="Rossi C."/>
        </authorList>
    </citation>
    <scope>NUCLEOTIDE SEQUENCE [GENOMIC RNA]</scope>
    <scope>CHARACTERIZATION (3C-LIKE PROTEASE)</scope>
</reference>
<organism>
    <name type="scientific">Rabbit hemorrhagic disease virus (strain BS89)</name>
    <name type="common">Ra/LV/RHDV/BS89/1989/IT</name>
    <name type="synonym">RHDV-BS89</name>
    <dbReference type="NCBI Taxonomy" id="314537"/>
    <lineage>
        <taxon>Viruses</taxon>
        <taxon>Riboviria</taxon>
        <taxon>Orthornavirae</taxon>
        <taxon>Pisuviricota</taxon>
        <taxon>Pisoniviricetes</taxon>
        <taxon>Picornavirales</taxon>
        <taxon>Caliciviridae</taxon>
        <taxon>Lagovirus</taxon>
        <taxon>Rabbit hemorrhagic disease virus</taxon>
    </lineage>
</organism>
<proteinExistence type="evidence at protein level"/>
<sequence>MAAMSRLTGMTTAILPEKKPLNFFLDLRDKTPPCCIRATGKLAWPVFPGQNGKEGPLKTCNKCGKWLNGFGYFGLEDLGDVCLCSIAQQKHKFGPVCLCNRAYIHDCGRWRRRSRFLKHYKALNKVIPCAYQFDESFSTPVFEGEVDDLFVELGAPTSMGFMDKKLLKKGKKLMDKFVDVDEPCLTSRDASLLDSIASDTTIRAKLEEEYGVEMVQAARDRKDFMKNLRLALDNRPANPVTWYTKLGNITEKGKQWAKKVVYGACKVTDPLKTLASILLVGLHNVIAVDTTVMLSTFKPVNLLAILMDWTNDLAGFVTTLVRLLELYGVVQATVNLIIEGVKSFWDKVVCATERCFDLLKRLFDTFEDSVPTGPTAGCLIFMAFVFSTVVGYLPNNSVITTFMKGAGKLTTFAGVIGAIRTLWITINQHMVAKDLTSIQQKVMTVVKMANEAATLDQLEIVSCLCSDLENTLTNRCTLPSYNQHLGILNASQKVISDLHTMVLGKINMTKQRPQPVAVIFKGAPGIGKTYLVHRIARDLGCQHPSTINFGLDHFDSYTGEEVAIADEFNTCGDGESWVELFIQMVNTNPCPLNCDKAENKNKVFNSKYLLCTTNSNMILNATHPRAGAFYRRVMIVEARNKAVESWQATRHGSKPGKSCYSKDMSHLTFQVYPHNMPAPGFVFVGDKLVKSQVAPREYKYSELLDLIKSEHPDVASFDGANRFNFVYPDAQYDQALLMWKQYFVMYGCVARLAKNFVDDIPYNQVHISRASDPKIEGCVEYQCKFQHLWRMVPQFVLGCVNMTNQLGTPLTQQQLDRITNGVEGVTVTTVNNILAFHSQTTLINPSFLKLIWAVRKHLKGLSGVTKVAQFIWRVMTNPVDAYGSLVRTLTGAATFSDEPVSTTIICSNCTIQIHSCGGLLVRYSRDPVPVASDNVDRGDQGVDVFTDPNLISGFSWRQIAHLFVEVISHLCANHLVNLATMAALGPVATKAFQGVKGKTKRGRGARVNLGNDEYDEWQAARREFVNAHDMTAEEYLAMKNKAAMGSDDQDSVMFRSWWTRRQLRPDEDQVTIVGRGGVRNEVIRTRVRQTPKGPKTLDDGGFYDNDYEGLPGFMRHNGSGWMIHIGNGLYISNTHTARSSCSEIVTCSPTTDLCLVKGEAIRSVAQIAEGTPVCDWKKSPISTYGIKKTLSDSTKIDVLAYDGCTQTTHGDCGLPLYDSSGKIVAIHTGKLLGFSKMCTLIDLTITKGVYETSNFFCGEPIDYRGITAHRLVGAEPRPPVSGTRYAKVPGVPDEYKTGYRPANLGRSDPDSDKSLMNIAVKNLQVYQQEPKLDKVDEFIERAAADVLGYLRFLTKGERQANLNFKAAFNTLDLSTSCGPFVPGKKIDHVKDGVMDQVLAKHLYKCWSVANSGKALHHIYACGLKDELRPLDKVREGKKRLLWGCDVGVAVCRAAVFHNICYKLKMVARFGPIAVGVDMTSRDVDVIINNLTSKASDFLCLDYSKWDSTMSPCVVRLAIDILADCCEQTELTKSVVLTLKSHPMTILDAMIVQTKRGLPSGMPFTSVINSICHWLLWSAAVYKSCAEIGLHCSNLYEDAPFYTYGDDGVYAMTPMMVSLLPAIIENLRDYGLSPTAADKTEFIDVCPLNKISFLKRTFELTDIGWVSKLDKSSILRQLEWSKTTSRHMMIEETYDLAKEERGVQLEELQVPAAAHGQEFFNFVCKELERQQAYTQFSVYSYDAARKILADRKRVVSVVPDDEFVNVMEGKARTAPQGEAAGTATTASVPGTTTDGLDPGVVATTSVVTAENSSASIATAGIGGPPQQVDQQETWRTNFYYNDVFTWSVADAPGSILYTVQHSPQNNPFTAVLSQMYAGWAGGMQFRFIVAGSGVFGGRLVAAVIPPGIEIGPGLEVRQFPHVVIDARSLEPVTITMPDLRPNMYHPTGDPGLVPTLVLSVYNNLINPFGGSTSAIQVTVETRPSEDFEFVMIRAPSSKTVDSISPAGLLTTPVLTGVGNDNRWNGQIVGLQPVPGGFSTCNRHWNLNGSTYGWSSPRFADIDHRRGSASYPGSNATNVLQFWYANAGSAVDNPISQVAPDGFPDMSFVPFNGPGIPAAGWVGFGAIWNSNSGAPNVTTVQAYELGFATGAPGNLQPTTNTSGAQTVAKSIYAVVTGTAQNPAGLFVMASGVISTPNANAITYTPQPDRIVTTPGTPAAAPVGKNTPIMFASVVRRTGDVNATAGSANGTQYGTGSQPLPVTIGLSLNNYSSALMPGQFFVWQLTFASGFMEIGLSVDGYFYAGTGASTTLIDLTELIDVRPVGPRPSKSTLVFNLGGTANGFSYV</sequence>
<evidence type="ECO:0000250" key="1"/>
<evidence type="ECO:0000250" key="2">
    <source>
        <dbReference type="UniProtKB" id="P27409"/>
    </source>
</evidence>
<evidence type="ECO:0000250" key="3">
    <source>
        <dbReference type="UniProtKB" id="P27410"/>
    </source>
</evidence>
<evidence type="ECO:0000250" key="4">
    <source>
        <dbReference type="UniProtKB" id="P27411"/>
    </source>
</evidence>
<evidence type="ECO:0000250" key="5">
    <source>
        <dbReference type="UniProtKB" id="P54634"/>
    </source>
</evidence>
<evidence type="ECO:0000250" key="6">
    <source>
        <dbReference type="UniProtKB" id="Q04544"/>
    </source>
</evidence>
<evidence type="ECO:0000250" key="7">
    <source>
        <dbReference type="UniProtKB" id="Q66914"/>
    </source>
</evidence>
<evidence type="ECO:0000250" key="8">
    <source>
        <dbReference type="UniProtKB" id="Q86119"/>
    </source>
</evidence>
<evidence type="ECO:0000255" key="9">
    <source>
        <dbReference type="PROSITE-ProRule" id="PRU00539"/>
    </source>
</evidence>
<evidence type="ECO:0000255" key="10">
    <source>
        <dbReference type="PROSITE-ProRule" id="PRU00551"/>
    </source>
</evidence>
<evidence type="ECO:0000255" key="11">
    <source>
        <dbReference type="PROSITE-ProRule" id="PRU01242"/>
    </source>
</evidence>
<evidence type="ECO:0000256" key="12">
    <source>
        <dbReference type="SAM" id="MobiDB-lite"/>
    </source>
</evidence>
<evidence type="ECO:0000305" key="13"/>
<feature type="chain" id="PRO_0000342003" description="Genome polyprotein">
    <location>
        <begin position="1"/>
        <end position="2344"/>
    </location>
</feature>
<feature type="chain" id="PRO_0000036950" description="NS1">
    <location>
        <begin position="1"/>
        <end position="143"/>
    </location>
</feature>
<feature type="chain" id="PRO_0000036951" description="NS2">
    <location>
        <begin position="144"/>
        <end position="339"/>
    </location>
</feature>
<feature type="chain" id="PRO_0000036952" description="NTPase">
    <location>
        <begin position="340"/>
        <end position="718"/>
    </location>
</feature>
<feature type="chain" id="PRO_0000342004" description="Precursor p41">
    <location>
        <begin position="719"/>
        <end position="1108"/>
    </location>
</feature>
<feature type="chain" id="PRO_0000036953" description="NS4">
    <location>
        <begin position="719"/>
        <end position="993"/>
    </location>
</feature>
<feature type="chain" id="PRO_0000342005" description="Protein p23/2">
    <location>
        <begin position="719"/>
        <end position="936"/>
    </location>
</feature>
<feature type="chain" id="PRO_0000342006" description="Protein p18">
    <location>
        <begin position="937"/>
        <end position="1108"/>
    </location>
</feature>
<feature type="chain" id="PRO_0000036954" description="Viral genome-linked protein">
    <location>
        <begin position="994"/>
        <end position="1108"/>
    </location>
</feature>
<feature type="chain" id="PRO_0000036955" description="3C-like protease">
    <location>
        <begin position="1109"/>
        <end position="1251"/>
    </location>
</feature>
<feature type="chain" id="PRO_0000036956" description="RNA-directed RNA polymerase">
    <location>
        <begin position="1252"/>
        <end position="1767"/>
    </location>
</feature>
<feature type="chain" id="PRO_0000036958" description="Capsid protein VP60">
    <location>
        <begin position="1768"/>
        <end position="2344"/>
    </location>
</feature>
<feature type="domain" description="SF3 helicase" evidence="10">
    <location>
        <begin position="492"/>
        <end position="653"/>
    </location>
</feature>
<feature type="domain" description="Peptidase C24" evidence="11">
    <location>
        <begin position="1109"/>
        <end position="1244"/>
    </location>
</feature>
<feature type="domain" description="RdRp catalytic" evidence="9">
    <location>
        <begin position="1495"/>
        <end position="1619"/>
    </location>
</feature>
<feature type="region of interest" description="Disordered" evidence="12">
    <location>
        <begin position="1771"/>
        <end position="1794"/>
    </location>
</feature>
<feature type="compositionally biased region" description="Low complexity" evidence="12">
    <location>
        <begin position="1778"/>
        <end position="1794"/>
    </location>
</feature>
<feature type="active site" description="For 3CLpro activity" evidence="11">
    <location>
        <position position="1135"/>
    </location>
</feature>
<feature type="active site" description="For 3CLpro activity" evidence="11">
    <location>
        <position position="1152"/>
    </location>
</feature>
<feature type="active site" description="For 3CLpro activity" evidence="11">
    <location>
        <position position="1212"/>
    </location>
</feature>
<feature type="binding site" evidence="10">
    <location>
        <begin position="522"/>
        <end position="529"/>
    </location>
    <ligand>
        <name>ATP</name>
        <dbReference type="ChEBI" id="CHEBI:30616"/>
    </ligand>
</feature>
<feature type="site" description="Cleavage; by 3CLpro" evidence="3">
    <location>
        <begin position="143"/>
        <end position="144"/>
    </location>
</feature>
<feature type="site" description="Cleavage; by Pro-Pol" evidence="3">
    <location>
        <begin position="339"/>
        <end position="340"/>
    </location>
</feature>
<feature type="site" description="Cleavage; by 3CLpro" evidence="3">
    <location>
        <begin position="718"/>
        <end position="719"/>
    </location>
</feature>
<feature type="site" description="Cleavage; by host" evidence="3">
    <location>
        <begin position="936"/>
        <end position="937"/>
    </location>
</feature>
<feature type="site" description="Cleavage; by Pro-Pol" evidence="3">
    <location>
        <begin position="993"/>
        <end position="994"/>
    </location>
</feature>
<feature type="site" description="Cleavage; by Pro-Pol" evidence="3">
    <location>
        <begin position="1108"/>
        <end position="1109"/>
    </location>
</feature>
<feature type="site" description="Cleavage; by Pro-Pol" evidence="3">
    <location>
        <begin position="1251"/>
        <end position="1252"/>
    </location>
</feature>
<feature type="site" description="Cleavage; by Pro-Pol" evidence="3">
    <location>
        <begin position="1767"/>
        <end position="1768"/>
    </location>
</feature>
<feature type="modified residue" description="O-(5'-phospho-RNA)-tyrosine" evidence="8">
    <location>
        <position position="1014"/>
    </location>
</feature>
<feature type="modified residue" description="O-UMP-tyrosine; transient" evidence="8">
    <location>
        <position position="1014"/>
    </location>
</feature>
<feature type="disulfide bond" evidence="1">
    <location>
        <begin position="1584"/>
        <end position="1591"/>
    </location>
</feature>
<feature type="splice variant" id="VSP_034380" description="In isoform Subgenomic capsid protein VP60." evidence="13">
    <location>
        <begin position="1"/>
        <end position="1765"/>
    </location>
</feature>
<keyword id="KW-0877">Alternative promoter usage</keyword>
<keyword id="KW-0067">ATP-binding</keyword>
<keyword id="KW-0167">Capsid protein</keyword>
<keyword id="KW-0191">Covalent protein-RNA linkage</keyword>
<keyword id="KW-1015">Disulfide bond</keyword>
<keyword id="KW-0347">Helicase</keyword>
<keyword id="KW-1035">Host cytoplasm</keyword>
<keyword id="KW-1038">Host endoplasmic reticulum</keyword>
<keyword id="KW-0378">Hydrolase</keyword>
<keyword id="KW-0547">Nucleotide-binding</keyword>
<keyword id="KW-0548">Nucleotidyltransferase</keyword>
<keyword id="KW-0597">Phosphoprotein</keyword>
<keyword id="KW-0645">Protease</keyword>
<keyword id="KW-0696">RNA-directed RNA polymerase</keyword>
<keyword id="KW-0788">Thiol protease</keyword>
<keyword id="KW-0808">Transferase</keyword>
<keyword id="KW-0693">Viral RNA replication</keyword>
<keyword id="KW-0946">Virion</keyword>
<accession>Q89273</accession>